<proteinExistence type="inferred from homology"/>
<feature type="chain" id="PRO_0000160278" description="Protein PsiE homolog">
    <location>
        <begin position="1"/>
        <end position="134"/>
    </location>
</feature>
<feature type="transmembrane region" description="Helical" evidence="1">
    <location>
        <begin position="14"/>
        <end position="34"/>
    </location>
</feature>
<feature type="transmembrane region" description="Helical" evidence="1">
    <location>
        <begin position="56"/>
        <end position="76"/>
    </location>
</feature>
<feature type="transmembrane region" description="Helical" evidence="1">
    <location>
        <begin position="82"/>
        <end position="102"/>
    </location>
</feature>
<feature type="transmembrane region" description="Helical" evidence="1">
    <location>
        <begin position="106"/>
        <end position="126"/>
    </location>
</feature>
<name>PSIE_BACAN</name>
<dbReference type="EMBL" id="AE016879">
    <property type="protein sequence ID" value="AAP28986.1"/>
    <property type="molecule type" value="Genomic_DNA"/>
</dbReference>
<dbReference type="EMBL" id="AE017334">
    <property type="protein sequence ID" value="AAT34457.1"/>
    <property type="molecule type" value="Genomic_DNA"/>
</dbReference>
<dbReference type="EMBL" id="AE017225">
    <property type="protein sequence ID" value="AAT57237.1"/>
    <property type="molecule type" value="Genomic_DNA"/>
</dbReference>
<dbReference type="RefSeq" id="NP_847500.1">
    <property type="nucleotide sequence ID" value="NC_003997.3"/>
</dbReference>
<dbReference type="RefSeq" id="WP_000834704.1">
    <property type="nucleotide sequence ID" value="NZ_WXXJ01000007.1"/>
</dbReference>
<dbReference type="RefSeq" id="YP_031187.1">
    <property type="nucleotide sequence ID" value="NC_005945.1"/>
</dbReference>
<dbReference type="SMR" id="Q81XB6"/>
<dbReference type="STRING" id="261594.GBAA_5324"/>
<dbReference type="DNASU" id="1084826"/>
<dbReference type="GeneID" id="75088253"/>
<dbReference type="KEGG" id="ban:BA_5324"/>
<dbReference type="KEGG" id="bar:GBAA_5324"/>
<dbReference type="KEGG" id="bat:BAS4946"/>
<dbReference type="PATRIC" id="fig|198094.11.peg.5284"/>
<dbReference type="eggNOG" id="COG3223">
    <property type="taxonomic scope" value="Bacteria"/>
</dbReference>
<dbReference type="HOGENOM" id="CLU_127561_0_0_9"/>
<dbReference type="OMA" id="HEWHQKV"/>
<dbReference type="OrthoDB" id="9792470at2"/>
<dbReference type="Proteomes" id="UP000000427">
    <property type="component" value="Chromosome"/>
</dbReference>
<dbReference type="Proteomes" id="UP000000594">
    <property type="component" value="Chromosome"/>
</dbReference>
<dbReference type="GO" id="GO:0005886">
    <property type="term" value="C:plasma membrane"/>
    <property type="evidence" value="ECO:0007669"/>
    <property type="project" value="UniProtKB-SubCell"/>
</dbReference>
<dbReference type="GO" id="GO:0016036">
    <property type="term" value="P:cellular response to phosphate starvation"/>
    <property type="evidence" value="ECO:0007669"/>
    <property type="project" value="InterPro"/>
</dbReference>
<dbReference type="HAMAP" id="MF_01048">
    <property type="entry name" value="PsiE"/>
    <property type="match status" value="1"/>
</dbReference>
<dbReference type="InterPro" id="IPR009315">
    <property type="entry name" value="P_starv_induced_PsiE"/>
</dbReference>
<dbReference type="InterPro" id="IPR020948">
    <property type="entry name" value="P_starv_induced_PsiE-like"/>
</dbReference>
<dbReference type="NCBIfam" id="NF002765">
    <property type="entry name" value="PRK02833.1-3"/>
    <property type="match status" value="1"/>
</dbReference>
<dbReference type="PANTHER" id="PTHR37819">
    <property type="entry name" value="PROTEIN PSIE"/>
    <property type="match status" value="1"/>
</dbReference>
<dbReference type="PANTHER" id="PTHR37819:SF1">
    <property type="entry name" value="PROTEIN PSIE"/>
    <property type="match status" value="1"/>
</dbReference>
<dbReference type="Pfam" id="PF06146">
    <property type="entry name" value="PsiE"/>
    <property type="match status" value="1"/>
</dbReference>
<dbReference type="PIRSF" id="PIRSF029598">
    <property type="entry name" value="PsiE"/>
    <property type="match status" value="1"/>
</dbReference>
<evidence type="ECO:0000255" key="1">
    <source>
        <dbReference type="HAMAP-Rule" id="MF_01048"/>
    </source>
</evidence>
<sequence>MKSFNIDHFIASVLQWILNIALIILSIVLSIFLINETITFIQYIFSAKKYTSYKLVESIIVYFLYFEFIALIIKYFKSNYHFPLRYFIYIGITALIRLIIVSHEEPMETLLYAGAILVLVIALYISNMRDLRKE</sequence>
<gene>
    <name evidence="1" type="primary">psiE</name>
    <name type="ordered locus">BA_5324</name>
    <name type="ordered locus">GBAA_5324</name>
    <name type="ordered locus">BAS4946</name>
</gene>
<keyword id="KW-1003">Cell membrane</keyword>
<keyword id="KW-0472">Membrane</keyword>
<keyword id="KW-1185">Reference proteome</keyword>
<keyword id="KW-0812">Transmembrane</keyword>
<keyword id="KW-1133">Transmembrane helix</keyword>
<comment type="subcellular location">
    <subcellularLocation>
        <location evidence="1">Cell membrane</location>
        <topology evidence="1">Multi-pass membrane protein</topology>
    </subcellularLocation>
</comment>
<comment type="similarity">
    <text evidence="1">Belongs to the PsiE family.</text>
</comment>
<protein>
    <recommendedName>
        <fullName evidence="1">Protein PsiE homolog</fullName>
    </recommendedName>
</protein>
<reference key="1">
    <citation type="journal article" date="2003" name="Nature">
        <title>The genome sequence of Bacillus anthracis Ames and comparison to closely related bacteria.</title>
        <authorList>
            <person name="Read T.D."/>
            <person name="Peterson S.N."/>
            <person name="Tourasse N.J."/>
            <person name="Baillie L.W."/>
            <person name="Paulsen I.T."/>
            <person name="Nelson K.E."/>
            <person name="Tettelin H."/>
            <person name="Fouts D.E."/>
            <person name="Eisen J.A."/>
            <person name="Gill S.R."/>
            <person name="Holtzapple E.K."/>
            <person name="Okstad O.A."/>
            <person name="Helgason E."/>
            <person name="Rilstone J."/>
            <person name="Wu M."/>
            <person name="Kolonay J.F."/>
            <person name="Beanan M.J."/>
            <person name="Dodson R.J."/>
            <person name="Brinkac L.M."/>
            <person name="Gwinn M.L."/>
            <person name="DeBoy R.T."/>
            <person name="Madpu R."/>
            <person name="Daugherty S.C."/>
            <person name="Durkin A.S."/>
            <person name="Haft D.H."/>
            <person name="Nelson W.C."/>
            <person name="Peterson J.D."/>
            <person name="Pop M."/>
            <person name="Khouri H.M."/>
            <person name="Radune D."/>
            <person name="Benton J.L."/>
            <person name="Mahamoud Y."/>
            <person name="Jiang L."/>
            <person name="Hance I.R."/>
            <person name="Weidman J.F."/>
            <person name="Berry K.J."/>
            <person name="Plaut R.D."/>
            <person name="Wolf A.M."/>
            <person name="Watkins K.L."/>
            <person name="Nierman W.C."/>
            <person name="Hazen A."/>
            <person name="Cline R.T."/>
            <person name="Redmond C."/>
            <person name="Thwaite J.E."/>
            <person name="White O."/>
            <person name="Salzberg S.L."/>
            <person name="Thomason B."/>
            <person name="Friedlander A.M."/>
            <person name="Koehler T.M."/>
            <person name="Hanna P.C."/>
            <person name="Kolstoe A.-B."/>
            <person name="Fraser C.M."/>
        </authorList>
    </citation>
    <scope>NUCLEOTIDE SEQUENCE [LARGE SCALE GENOMIC DNA]</scope>
    <source>
        <strain>Ames / isolate Porton</strain>
    </source>
</reference>
<reference key="2">
    <citation type="journal article" date="2009" name="J. Bacteriol.">
        <title>The complete genome sequence of Bacillus anthracis Ames 'Ancestor'.</title>
        <authorList>
            <person name="Ravel J."/>
            <person name="Jiang L."/>
            <person name="Stanley S.T."/>
            <person name="Wilson M.R."/>
            <person name="Decker R.S."/>
            <person name="Read T.D."/>
            <person name="Worsham P."/>
            <person name="Keim P.S."/>
            <person name="Salzberg S.L."/>
            <person name="Fraser-Liggett C.M."/>
            <person name="Rasko D.A."/>
        </authorList>
    </citation>
    <scope>NUCLEOTIDE SEQUENCE [LARGE SCALE GENOMIC DNA]</scope>
    <source>
        <strain>Ames ancestor</strain>
    </source>
</reference>
<reference key="3">
    <citation type="submission" date="2004-01" db="EMBL/GenBank/DDBJ databases">
        <title>Complete genome sequence of Bacillus anthracis Sterne.</title>
        <authorList>
            <person name="Brettin T.S."/>
            <person name="Bruce D."/>
            <person name="Challacombe J.F."/>
            <person name="Gilna P."/>
            <person name="Han C."/>
            <person name="Hill K."/>
            <person name="Hitchcock P."/>
            <person name="Jackson P."/>
            <person name="Keim P."/>
            <person name="Longmire J."/>
            <person name="Lucas S."/>
            <person name="Okinaka R."/>
            <person name="Richardson P."/>
            <person name="Rubin E."/>
            <person name="Tice H."/>
        </authorList>
    </citation>
    <scope>NUCLEOTIDE SEQUENCE [LARGE SCALE GENOMIC DNA]</scope>
    <source>
        <strain>Sterne</strain>
    </source>
</reference>
<organism>
    <name type="scientific">Bacillus anthracis</name>
    <dbReference type="NCBI Taxonomy" id="1392"/>
    <lineage>
        <taxon>Bacteria</taxon>
        <taxon>Bacillati</taxon>
        <taxon>Bacillota</taxon>
        <taxon>Bacilli</taxon>
        <taxon>Bacillales</taxon>
        <taxon>Bacillaceae</taxon>
        <taxon>Bacillus</taxon>
        <taxon>Bacillus cereus group</taxon>
    </lineage>
</organism>
<accession>Q81XB6</accession>
<accession>Q6HR51</accession>
<accession>Q6KKG8</accession>